<keyword id="KW-0067">ATP-binding</keyword>
<keyword id="KW-0418">Kinase</keyword>
<keyword id="KW-0460">Magnesium</keyword>
<keyword id="KW-0479">Metal-binding</keyword>
<keyword id="KW-0547">Nucleotide-binding</keyword>
<keyword id="KW-0808">Transferase</keyword>
<keyword id="KW-0862">Zinc</keyword>
<proteinExistence type="inferred from homology"/>
<organism>
    <name type="scientific">Escherichia coli O6:K15:H31 (strain 536 / UPEC)</name>
    <dbReference type="NCBI Taxonomy" id="362663"/>
    <lineage>
        <taxon>Bacteria</taxon>
        <taxon>Pseudomonadati</taxon>
        <taxon>Pseudomonadota</taxon>
        <taxon>Gammaproteobacteria</taxon>
        <taxon>Enterobacterales</taxon>
        <taxon>Enterobacteriaceae</taxon>
        <taxon>Escherichia</taxon>
    </lineage>
</organism>
<feature type="chain" id="PRO_0000268838" description="Pyridoxine/pyridoxal/pyridoxamine kinase">
    <location>
        <begin position="1"/>
        <end position="283"/>
    </location>
</feature>
<feature type="binding site" evidence="1">
    <location>
        <position position="23"/>
    </location>
    <ligand>
        <name>substrate</name>
    </ligand>
</feature>
<feature type="binding site" evidence="1">
    <location>
        <position position="59"/>
    </location>
    <ligand>
        <name>substrate</name>
    </ligand>
</feature>
<feature type="binding site" evidence="1">
    <location>
        <position position="125"/>
    </location>
    <ligand>
        <name>ATP</name>
        <dbReference type="ChEBI" id="CHEBI:30616"/>
    </ligand>
</feature>
<feature type="binding site" evidence="1">
    <location>
        <position position="136"/>
    </location>
    <ligand>
        <name>Mg(2+)</name>
        <dbReference type="ChEBI" id="CHEBI:18420"/>
    </ligand>
</feature>
<feature type="binding site" evidence="1">
    <location>
        <position position="157"/>
    </location>
    <ligand>
        <name>ATP</name>
        <dbReference type="ChEBI" id="CHEBI:30616"/>
    </ligand>
</feature>
<feature type="binding site" evidence="1">
    <location>
        <position position="162"/>
    </location>
    <ligand>
        <name>ATP</name>
        <dbReference type="ChEBI" id="CHEBI:30616"/>
    </ligand>
</feature>
<feature type="binding site" evidence="1">
    <location>
        <position position="162"/>
    </location>
    <ligand>
        <name>Mg(2+)</name>
        <dbReference type="ChEBI" id="CHEBI:18420"/>
    </ligand>
</feature>
<feature type="binding site" evidence="1">
    <location>
        <position position="195"/>
    </location>
    <ligand>
        <name>ATP</name>
        <dbReference type="ChEBI" id="CHEBI:30616"/>
    </ligand>
</feature>
<feature type="binding site" evidence="1">
    <location>
        <begin position="221"/>
        <end position="224"/>
    </location>
    <ligand>
        <name>ATP</name>
        <dbReference type="ChEBI" id="CHEBI:30616"/>
    </ligand>
</feature>
<feature type="binding site" evidence="1">
    <location>
        <position position="231"/>
    </location>
    <ligand>
        <name>ATP</name>
        <dbReference type="ChEBI" id="CHEBI:30616"/>
    </ligand>
</feature>
<feature type="binding site" evidence="1">
    <location>
        <position position="233"/>
    </location>
    <ligand>
        <name>substrate</name>
    </ligand>
</feature>
<sequence length="283" mass="30848">MSSLLLFNDKSRALQADIVAVQSQVVYGSVGNSIAVPAIKQNGLNVFAVPTVLLSNTPHYDTFYGGAIPDEWFSGYLRALQERDALRQLRAVTTGYMGTASQIKILAEWLTALRKDHPDLLIMVDPVIGDIDSGIYVKPDLPEAYRQYLLPLAQGITPNIFELEILTGKDCRDLDSAIAAAKSLLSDTLKWVVITSASGNEENQEMQVVVVSADSVNVISHSRVKTDLKGTGDLFCAQLISGLLKGKALTDAVHRAGLRVLEVMRYTQQHESDELILPPLAEA</sequence>
<name>PDXK_ECOL5</name>
<gene>
    <name evidence="1" type="primary">pdxK</name>
    <name type="ordered locus">ECP_2442</name>
</gene>
<accession>Q0TF48</accession>
<evidence type="ECO:0000255" key="1">
    <source>
        <dbReference type="HAMAP-Rule" id="MF_01638"/>
    </source>
</evidence>
<comment type="function">
    <text evidence="1">B6-vitamer kinase involved in the salvage pathway of pyridoxal 5'-phosphate (PLP). Catalyzes the phosphorylation of pyridoxine (PN), pyridoxal (PL), and pyridoxamine (PM), forming their respective 5'-phosphorylated esters, i.e. PNP, PLP and PMP.</text>
</comment>
<comment type="catalytic activity">
    <reaction evidence="1">
        <text>pyridoxal + ATP = pyridoxal 5'-phosphate + ADP + H(+)</text>
        <dbReference type="Rhea" id="RHEA:10224"/>
        <dbReference type="ChEBI" id="CHEBI:15378"/>
        <dbReference type="ChEBI" id="CHEBI:17310"/>
        <dbReference type="ChEBI" id="CHEBI:30616"/>
        <dbReference type="ChEBI" id="CHEBI:456216"/>
        <dbReference type="ChEBI" id="CHEBI:597326"/>
        <dbReference type="EC" id="2.7.1.35"/>
    </reaction>
</comment>
<comment type="catalytic activity">
    <reaction evidence="1">
        <text>pyridoxine + ATP = pyridoxine 5'-phosphate + ADP + H(+)</text>
        <dbReference type="Rhea" id="RHEA:25108"/>
        <dbReference type="ChEBI" id="CHEBI:15378"/>
        <dbReference type="ChEBI" id="CHEBI:16709"/>
        <dbReference type="ChEBI" id="CHEBI:30616"/>
        <dbReference type="ChEBI" id="CHEBI:58589"/>
        <dbReference type="ChEBI" id="CHEBI:456216"/>
        <dbReference type="EC" id="2.7.1.35"/>
    </reaction>
</comment>
<comment type="catalytic activity">
    <reaction evidence="1">
        <text>pyridoxamine + ATP = pyridoxamine 5'-phosphate + ADP + H(+)</text>
        <dbReference type="Rhea" id="RHEA:25104"/>
        <dbReference type="ChEBI" id="CHEBI:15378"/>
        <dbReference type="ChEBI" id="CHEBI:30616"/>
        <dbReference type="ChEBI" id="CHEBI:57761"/>
        <dbReference type="ChEBI" id="CHEBI:58451"/>
        <dbReference type="ChEBI" id="CHEBI:456216"/>
        <dbReference type="EC" id="2.7.1.35"/>
    </reaction>
</comment>
<comment type="cofactor">
    <cofactor evidence="1">
        <name>Mg(2+)</name>
        <dbReference type="ChEBI" id="CHEBI:18420"/>
    </cofactor>
</comment>
<comment type="pathway">
    <text evidence="1">Cofactor metabolism; pyridoxal 5'-phosphate salvage; pyridoxal 5'-phosphate from pyridoxal: step 1/1.</text>
</comment>
<comment type="pathway">
    <text evidence="1">Cofactor metabolism; pyridoxal 5'-phosphate salvage; pyridoxine 5'-phosphate from pyridoxine: step 1/1.</text>
</comment>
<comment type="pathway">
    <text evidence="1">Cofactor metabolism; pyridoxal 5'-phosphate salvage; pyridoxamine 5'-phosphate from pyridoxamine: step 1/1.</text>
</comment>
<comment type="subunit">
    <text evidence="1">Homodimer.</text>
</comment>
<comment type="similarity">
    <text evidence="1">Belongs to the pyridoxine kinase family. PdxK subfamily.</text>
</comment>
<protein>
    <recommendedName>
        <fullName evidence="1">Pyridoxine/pyridoxal/pyridoxamine kinase</fullName>
        <shortName evidence="1">PN/PL/PM kinase</shortName>
        <ecNumber evidence="1">2.7.1.35</ecNumber>
    </recommendedName>
    <alternativeName>
        <fullName evidence="1">B6-vitamer kinase</fullName>
    </alternativeName>
</protein>
<dbReference type="EC" id="2.7.1.35" evidence="1"/>
<dbReference type="EMBL" id="CP000247">
    <property type="protein sequence ID" value="ABG70431.1"/>
    <property type="molecule type" value="Genomic_DNA"/>
</dbReference>
<dbReference type="RefSeq" id="WP_000096640.1">
    <property type="nucleotide sequence ID" value="NC_008253.1"/>
</dbReference>
<dbReference type="SMR" id="Q0TF48"/>
<dbReference type="KEGG" id="ecp:ECP_2442"/>
<dbReference type="HOGENOM" id="CLU_046496_3_1_6"/>
<dbReference type="UniPathway" id="UPA01068">
    <property type="reaction ID" value="UER00298"/>
</dbReference>
<dbReference type="UniPathway" id="UPA01068">
    <property type="reaction ID" value="UER00299"/>
</dbReference>
<dbReference type="UniPathway" id="UPA01068">
    <property type="reaction ID" value="UER00300"/>
</dbReference>
<dbReference type="Proteomes" id="UP000009182">
    <property type="component" value="Chromosome"/>
</dbReference>
<dbReference type="GO" id="GO:0005829">
    <property type="term" value="C:cytosol"/>
    <property type="evidence" value="ECO:0007669"/>
    <property type="project" value="TreeGrafter"/>
</dbReference>
<dbReference type="GO" id="GO:0005524">
    <property type="term" value="F:ATP binding"/>
    <property type="evidence" value="ECO:0007669"/>
    <property type="project" value="UniProtKB-UniRule"/>
</dbReference>
<dbReference type="GO" id="GO:0008902">
    <property type="term" value="F:hydroxymethylpyrimidine kinase activity"/>
    <property type="evidence" value="ECO:0007669"/>
    <property type="project" value="TreeGrafter"/>
</dbReference>
<dbReference type="GO" id="GO:0000287">
    <property type="term" value="F:magnesium ion binding"/>
    <property type="evidence" value="ECO:0007669"/>
    <property type="project" value="UniProtKB-UniRule"/>
</dbReference>
<dbReference type="GO" id="GO:0008478">
    <property type="term" value="F:pyridoxal kinase activity"/>
    <property type="evidence" value="ECO:0007669"/>
    <property type="project" value="UniProtKB-UniRule"/>
</dbReference>
<dbReference type="GO" id="GO:0008270">
    <property type="term" value="F:zinc ion binding"/>
    <property type="evidence" value="ECO:0007669"/>
    <property type="project" value="UniProtKB-UniRule"/>
</dbReference>
<dbReference type="GO" id="GO:0009443">
    <property type="term" value="P:pyridoxal 5'-phosphate salvage"/>
    <property type="evidence" value="ECO:0007669"/>
    <property type="project" value="UniProtKB-UniRule"/>
</dbReference>
<dbReference type="CDD" id="cd01173">
    <property type="entry name" value="pyridoxal_pyridoxamine_kinase"/>
    <property type="match status" value="1"/>
</dbReference>
<dbReference type="FunFam" id="3.40.1190.20:FF:000009">
    <property type="entry name" value="Pyridoxine/pyridoxal/pyridoxamine kinase"/>
    <property type="match status" value="1"/>
</dbReference>
<dbReference type="Gene3D" id="3.40.1190.20">
    <property type="match status" value="1"/>
</dbReference>
<dbReference type="HAMAP" id="MF_01638">
    <property type="entry name" value="PdxK"/>
    <property type="match status" value="1"/>
</dbReference>
<dbReference type="InterPro" id="IPR023479">
    <property type="entry name" value="PdxK"/>
</dbReference>
<dbReference type="InterPro" id="IPR013749">
    <property type="entry name" value="PM/HMP-P_kinase-1"/>
</dbReference>
<dbReference type="InterPro" id="IPR004625">
    <property type="entry name" value="PyrdxlKinase"/>
</dbReference>
<dbReference type="InterPro" id="IPR029056">
    <property type="entry name" value="Ribokinase-like"/>
</dbReference>
<dbReference type="NCBIfam" id="NF006034">
    <property type="entry name" value="PRK08176.1"/>
    <property type="match status" value="1"/>
</dbReference>
<dbReference type="NCBIfam" id="TIGR00687">
    <property type="entry name" value="pyridox_kin"/>
    <property type="match status" value="1"/>
</dbReference>
<dbReference type="PANTHER" id="PTHR10534">
    <property type="entry name" value="PYRIDOXAL KINASE"/>
    <property type="match status" value="1"/>
</dbReference>
<dbReference type="PANTHER" id="PTHR10534:SF15">
    <property type="entry name" value="PYRIDOXINE_PYRIDOXAL_PYRIDOXAMINE KINASE"/>
    <property type="match status" value="1"/>
</dbReference>
<dbReference type="Pfam" id="PF08543">
    <property type="entry name" value="Phos_pyr_kin"/>
    <property type="match status" value="1"/>
</dbReference>
<dbReference type="SUPFAM" id="SSF53613">
    <property type="entry name" value="Ribokinase-like"/>
    <property type="match status" value="1"/>
</dbReference>
<reference key="1">
    <citation type="journal article" date="2006" name="Mol. Microbiol.">
        <title>Role of pathogenicity island-associated integrases in the genome plasticity of uropathogenic Escherichia coli strain 536.</title>
        <authorList>
            <person name="Hochhut B."/>
            <person name="Wilde C."/>
            <person name="Balling G."/>
            <person name="Middendorf B."/>
            <person name="Dobrindt U."/>
            <person name="Brzuszkiewicz E."/>
            <person name="Gottschalk G."/>
            <person name="Carniel E."/>
            <person name="Hacker J."/>
        </authorList>
    </citation>
    <scope>NUCLEOTIDE SEQUENCE [LARGE SCALE GENOMIC DNA]</scope>
    <source>
        <strain>536 / UPEC</strain>
    </source>
</reference>